<gene>
    <name type="ordered locus">MAP_0181c</name>
</gene>
<sequence length="160" mass="16342">MTVSFRPTADLVDDIGPDVRSCDLQFRQLGGRTEFAGPISTVRCFQDNALLKSVLSEPGGGGVLVVDGGGSLHTALVGDVIAELARANGWAGLIVNGAVRDSAALRGMDIGVKALGTNPRKSTKTGAGERDVDITLGGVTFTPGDIAYSDDDGIVVAVGD</sequence>
<comment type="function">
    <text evidence="1">Catalyzes the aldol cleavage of 4-hydroxy-4-methyl-2-oxoglutarate (HMG) into 2 molecules of pyruvate. Also contains a secondary oxaloacetate (OAA) decarboxylase activity due to the common pyruvate enolate transition state formed following C-C bond cleavage in the retro-aldol and decarboxylation reactions (By similarity).</text>
</comment>
<comment type="catalytic activity">
    <reaction>
        <text>4-hydroxy-4-methyl-2-oxoglutarate = 2 pyruvate</text>
        <dbReference type="Rhea" id="RHEA:22748"/>
        <dbReference type="ChEBI" id="CHEBI:15361"/>
        <dbReference type="ChEBI" id="CHEBI:58276"/>
        <dbReference type="EC" id="4.1.3.17"/>
    </reaction>
</comment>
<comment type="catalytic activity">
    <reaction>
        <text>oxaloacetate + H(+) = pyruvate + CO2</text>
        <dbReference type="Rhea" id="RHEA:15641"/>
        <dbReference type="ChEBI" id="CHEBI:15361"/>
        <dbReference type="ChEBI" id="CHEBI:15378"/>
        <dbReference type="ChEBI" id="CHEBI:16452"/>
        <dbReference type="ChEBI" id="CHEBI:16526"/>
        <dbReference type="EC" id="4.1.1.112"/>
    </reaction>
</comment>
<comment type="cofactor">
    <cofactor evidence="1">
        <name>a divalent metal cation</name>
        <dbReference type="ChEBI" id="CHEBI:60240"/>
    </cofactor>
    <text evidence="1">Divalent metal cation.</text>
</comment>
<comment type="subunit">
    <text evidence="1">Homotrimer.</text>
</comment>
<comment type="similarity">
    <text evidence="2">Belongs to the class II aldolase/RraA-like family.</text>
</comment>
<reference key="1">
    <citation type="journal article" date="2005" name="Proc. Natl. Acad. Sci. U.S.A.">
        <title>The complete genome sequence of Mycobacterium avium subspecies paratuberculosis.</title>
        <authorList>
            <person name="Li L."/>
            <person name="Bannantine J.P."/>
            <person name="Zhang Q."/>
            <person name="Amonsin A."/>
            <person name="May B.J."/>
            <person name="Alt D."/>
            <person name="Banerji N."/>
            <person name="Kanjilal S."/>
            <person name="Kapur V."/>
        </authorList>
    </citation>
    <scope>NUCLEOTIDE SEQUENCE [LARGE SCALE GENOMIC DNA]</scope>
    <source>
        <strain>ATCC BAA-968 / K-10</strain>
    </source>
</reference>
<organism>
    <name type="scientific">Mycolicibacterium paratuberculosis (strain ATCC BAA-968 / K-10)</name>
    <name type="common">Mycobacterium paratuberculosis</name>
    <dbReference type="NCBI Taxonomy" id="262316"/>
    <lineage>
        <taxon>Bacteria</taxon>
        <taxon>Bacillati</taxon>
        <taxon>Actinomycetota</taxon>
        <taxon>Actinomycetes</taxon>
        <taxon>Mycobacteriales</taxon>
        <taxon>Mycobacteriaceae</taxon>
        <taxon>Mycobacterium</taxon>
        <taxon>Mycobacterium avium complex (MAC)</taxon>
    </lineage>
</organism>
<name>RRAAH_MYCPA</name>
<proteinExistence type="inferred from homology"/>
<accession>Q745I2</accession>
<protein>
    <recommendedName>
        <fullName>Putative 4-hydroxy-4-methyl-2-oxoglutarate aldolase</fullName>
        <shortName>HMG aldolase</shortName>
        <ecNumber>4.1.3.17</ecNumber>
    </recommendedName>
    <alternativeName>
        <fullName>Oxaloacetate decarboxylase</fullName>
        <shortName>OAA decarboxylase</shortName>
        <ecNumber>4.1.1.112</ecNumber>
    </alternativeName>
    <alternativeName>
        <fullName>Regulator of ribonuclease activity homolog</fullName>
    </alternativeName>
    <alternativeName>
        <fullName>RraA-like protein</fullName>
    </alternativeName>
</protein>
<evidence type="ECO:0000250" key="1"/>
<evidence type="ECO:0000305" key="2"/>
<keyword id="KW-0456">Lyase</keyword>
<keyword id="KW-0479">Metal-binding</keyword>
<keyword id="KW-1185">Reference proteome</keyword>
<dbReference type="EC" id="4.1.3.17"/>
<dbReference type="EC" id="4.1.1.112"/>
<dbReference type="EMBL" id="AE016958">
    <property type="protein sequence ID" value="AAS02498.1"/>
    <property type="molecule type" value="Genomic_DNA"/>
</dbReference>
<dbReference type="SMR" id="Q745I2"/>
<dbReference type="STRING" id="262316.MAP_0181c"/>
<dbReference type="KEGG" id="mpa:MAP_0181c"/>
<dbReference type="eggNOG" id="COG0684">
    <property type="taxonomic scope" value="Bacteria"/>
</dbReference>
<dbReference type="HOGENOM" id="CLU_072626_4_0_11"/>
<dbReference type="Proteomes" id="UP000000580">
    <property type="component" value="Chromosome"/>
</dbReference>
<dbReference type="GO" id="GO:0047443">
    <property type="term" value="F:4-hydroxy-4-methyl-2-oxoglutarate aldolase activity"/>
    <property type="evidence" value="ECO:0007669"/>
    <property type="project" value="UniProtKB-EC"/>
</dbReference>
<dbReference type="GO" id="GO:0046872">
    <property type="term" value="F:metal ion binding"/>
    <property type="evidence" value="ECO:0007669"/>
    <property type="project" value="UniProtKB-KW"/>
</dbReference>
<dbReference type="GO" id="GO:0008948">
    <property type="term" value="F:oxaloacetate decarboxylase activity"/>
    <property type="evidence" value="ECO:0007669"/>
    <property type="project" value="UniProtKB-EC"/>
</dbReference>
<dbReference type="GO" id="GO:0008428">
    <property type="term" value="F:ribonuclease inhibitor activity"/>
    <property type="evidence" value="ECO:0007669"/>
    <property type="project" value="InterPro"/>
</dbReference>
<dbReference type="GO" id="GO:0051252">
    <property type="term" value="P:regulation of RNA metabolic process"/>
    <property type="evidence" value="ECO:0007669"/>
    <property type="project" value="InterPro"/>
</dbReference>
<dbReference type="CDD" id="cd16841">
    <property type="entry name" value="RraA_family"/>
    <property type="match status" value="1"/>
</dbReference>
<dbReference type="Gene3D" id="3.50.30.40">
    <property type="entry name" value="Ribonuclease E inhibitor RraA/RraA-like"/>
    <property type="match status" value="1"/>
</dbReference>
<dbReference type="InterPro" id="IPR010203">
    <property type="entry name" value="RraA"/>
</dbReference>
<dbReference type="InterPro" id="IPR005493">
    <property type="entry name" value="RraA/RraA-like"/>
</dbReference>
<dbReference type="InterPro" id="IPR036704">
    <property type="entry name" value="RraA/RraA-like_sf"/>
</dbReference>
<dbReference type="NCBIfam" id="TIGR01935">
    <property type="entry name" value="NOT-MenG"/>
    <property type="match status" value="1"/>
</dbReference>
<dbReference type="NCBIfam" id="NF006875">
    <property type="entry name" value="PRK09372.1"/>
    <property type="match status" value="1"/>
</dbReference>
<dbReference type="PANTHER" id="PTHR33254">
    <property type="entry name" value="4-HYDROXY-4-METHYL-2-OXOGLUTARATE ALDOLASE 3-RELATED"/>
    <property type="match status" value="1"/>
</dbReference>
<dbReference type="PANTHER" id="PTHR33254:SF4">
    <property type="entry name" value="4-HYDROXY-4-METHYL-2-OXOGLUTARATE ALDOLASE 3-RELATED"/>
    <property type="match status" value="1"/>
</dbReference>
<dbReference type="Pfam" id="PF03737">
    <property type="entry name" value="RraA-like"/>
    <property type="match status" value="1"/>
</dbReference>
<dbReference type="SUPFAM" id="SSF89562">
    <property type="entry name" value="RraA-like"/>
    <property type="match status" value="1"/>
</dbReference>
<feature type="chain" id="PRO_0000209622" description="Putative 4-hydroxy-4-methyl-2-oxoglutarate aldolase">
    <location>
        <begin position="1"/>
        <end position="160"/>
    </location>
</feature>
<feature type="binding site" evidence="1">
    <location>
        <begin position="78"/>
        <end position="81"/>
    </location>
    <ligand>
        <name>substrate</name>
    </ligand>
</feature>
<feature type="binding site" evidence="1">
    <location>
        <position position="100"/>
    </location>
    <ligand>
        <name>substrate</name>
    </ligand>
</feature>
<feature type="binding site" evidence="1">
    <location>
        <position position="101"/>
    </location>
    <ligand>
        <name>a divalent metal cation</name>
        <dbReference type="ChEBI" id="CHEBI:60240"/>
    </ligand>
</feature>